<reference key="1">
    <citation type="journal article" date="2001" name="Proc. Natl. Acad. Sci. U.S.A.">
        <title>Complete genome sequence of Caulobacter crescentus.</title>
        <authorList>
            <person name="Nierman W.C."/>
            <person name="Feldblyum T.V."/>
            <person name="Laub M.T."/>
            <person name="Paulsen I.T."/>
            <person name="Nelson K.E."/>
            <person name="Eisen J.A."/>
            <person name="Heidelberg J.F."/>
            <person name="Alley M.R.K."/>
            <person name="Ohta N."/>
            <person name="Maddock J.R."/>
            <person name="Potocka I."/>
            <person name="Nelson W.C."/>
            <person name="Newton A."/>
            <person name="Stephens C."/>
            <person name="Phadke N.D."/>
            <person name="Ely B."/>
            <person name="DeBoy R.T."/>
            <person name="Dodson R.J."/>
            <person name="Durkin A.S."/>
            <person name="Gwinn M.L."/>
            <person name="Haft D.H."/>
            <person name="Kolonay J.F."/>
            <person name="Smit J."/>
            <person name="Craven M.B."/>
            <person name="Khouri H.M."/>
            <person name="Shetty J."/>
            <person name="Berry K.J."/>
            <person name="Utterback T.R."/>
            <person name="Tran K."/>
            <person name="Wolf A.M."/>
            <person name="Vamathevan J.J."/>
            <person name="Ermolaeva M.D."/>
            <person name="White O."/>
            <person name="Salzberg S.L."/>
            <person name="Venter J.C."/>
            <person name="Shapiro L."/>
            <person name="Fraser C.M."/>
        </authorList>
    </citation>
    <scope>NUCLEOTIDE SEQUENCE [LARGE SCALE GENOMIC DNA]</scope>
    <source>
        <strain>ATCC 19089 / CIP 103742 / CB 15</strain>
    </source>
</reference>
<reference key="2">
    <citation type="journal article" date="2005" name="Nucleic Acids Res.">
        <title>Toxin-antitoxin loci are highly abundant in free-living but lost from host-associated prokaryotes.</title>
        <authorList>
            <person name="Pandey D.P."/>
            <person name="Gerdes K."/>
        </authorList>
    </citation>
    <scope>POSSIBLE FUNCTION</scope>
    <source>
        <strain>ATCC 19089 / CIP 103742 / CB 15</strain>
    </source>
</reference>
<reference key="3">
    <citation type="journal article" date="2010" name="Mol. Microbiol.">
        <title>Interaction specificity, toxicity and regulation of a paralogous set of ParE/RelE-family toxin-antitoxin systems.</title>
        <authorList>
            <person name="Fiebig A."/>
            <person name="Castro Rojas C.M."/>
            <person name="Siegal-Gaskins D."/>
            <person name="Crosson S."/>
        </authorList>
    </citation>
    <scope>FUNCTION AS A TOXIN</scope>
    <scope>DISRUPTION PHENOTYPE</scope>
    <source>
        <strain>ATCC 19089 / CIP 103742 / CB 15</strain>
    </source>
</reference>
<accession>Q9AA09</accession>
<gene>
    <name type="primary">relE1</name>
    <name type="ordered locus">CC_0802</name>
</gene>
<sequence length="93" mass="10486">MTFTVLVSVRAKRDFNRLIVWLVERDPRAAARLGPLLEAALDSLTEAPSRGRSVGPTTREISIPFGQSAYVIRYRLLGSSVHVTRIWHGLEQR</sequence>
<protein>
    <recommendedName>
        <fullName>Toxin RelE1</fullName>
    </recommendedName>
</protein>
<feature type="chain" id="PRO_0000408374" description="Toxin RelE1">
    <location>
        <begin position="1"/>
        <end position="93"/>
    </location>
</feature>
<evidence type="ECO:0000269" key="1">
    <source>
    </source>
</evidence>
<evidence type="ECO:0000305" key="2"/>
<proteinExistence type="evidence at protein level"/>
<dbReference type="EMBL" id="AE005673">
    <property type="protein sequence ID" value="AAK22787.1"/>
    <property type="molecule type" value="Genomic_DNA"/>
</dbReference>
<dbReference type="PIR" id="G87348">
    <property type="entry name" value="G87348"/>
</dbReference>
<dbReference type="RefSeq" id="NP_419619.1">
    <property type="nucleotide sequence ID" value="NC_002696.2"/>
</dbReference>
<dbReference type="RefSeq" id="WP_010918687.1">
    <property type="nucleotide sequence ID" value="NC_002696.2"/>
</dbReference>
<dbReference type="SMR" id="Q9AA09"/>
<dbReference type="STRING" id="190650.CC_0802"/>
<dbReference type="EnsemblBacteria" id="AAK22787">
    <property type="protein sequence ID" value="AAK22787"/>
    <property type="gene ID" value="CC_0802"/>
</dbReference>
<dbReference type="KEGG" id="ccr:CC_0802"/>
<dbReference type="eggNOG" id="COG3668">
    <property type="taxonomic scope" value="Bacteria"/>
</dbReference>
<dbReference type="HOGENOM" id="CLU_147162_13_0_5"/>
<dbReference type="BioCyc" id="CAULO:CC0802-MONOMER"/>
<dbReference type="Proteomes" id="UP000001816">
    <property type="component" value="Chromosome"/>
</dbReference>
<dbReference type="Gene3D" id="3.30.2310.20">
    <property type="entry name" value="RelE-like"/>
    <property type="match status" value="1"/>
</dbReference>
<dbReference type="InterPro" id="IPR007712">
    <property type="entry name" value="RelE/ParE_toxin"/>
</dbReference>
<dbReference type="InterPro" id="IPR035093">
    <property type="entry name" value="RelE/ParE_toxin_dom_sf"/>
</dbReference>
<dbReference type="Pfam" id="PF05016">
    <property type="entry name" value="ParE_toxin"/>
    <property type="match status" value="1"/>
</dbReference>
<keyword id="KW-1185">Reference proteome</keyword>
<keyword id="KW-1277">Toxin-antitoxin system</keyword>
<organism>
    <name type="scientific">Caulobacter vibrioides (strain ATCC 19089 / CIP 103742 / CB 15)</name>
    <name type="common">Caulobacter crescentus</name>
    <dbReference type="NCBI Taxonomy" id="190650"/>
    <lineage>
        <taxon>Bacteria</taxon>
        <taxon>Pseudomonadati</taxon>
        <taxon>Pseudomonadota</taxon>
        <taxon>Alphaproteobacteria</taxon>
        <taxon>Caulobacterales</taxon>
        <taxon>Caulobacteraceae</taxon>
        <taxon>Caulobacter</taxon>
    </lineage>
</organism>
<comment type="function">
    <text evidence="1">Toxic component of a type II toxin-antitoxin (TA) system. Its toxic effect is neutralized by coexpression with cognate antitoxin RelB1 but no other ParD or RelB antitoxin.</text>
</comment>
<comment type="disruption phenotype">
    <text evidence="1">No visible phenotype when deleted singly or as the relBE1 operon.</text>
</comment>
<comment type="similarity">
    <text evidence="2">Belongs to the RelE toxin family.</text>
</comment>
<name>RELE1_CAUVC</name>